<proteinExistence type="inferred from homology"/>
<accession>Q8CNR1</accession>
<name>FUMC_STAES</name>
<evidence type="ECO:0000255" key="1">
    <source>
        <dbReference type="HAMAP-Rule" id="MF_00743"/>
    </source>
</evidence>
<protein>
    <recommendedName>
        <fullName evidence="1">Fumarate hydratase class II</fullName>
        <shortName evidence="1">Fumarase C</shortName>
        <ecNumber evidence="1">4.2.1.2</ecNumber>
    </recommendedName>
    <alternativeName>
        <fullName evidence="1">Aerobic fumarase</fullName>
    </alternativeName>
    <alternativeName>
        <fullName evidence="1">Iron-independent fumarase</fullName>
    </alternativeName>
</protein>
<sequence>MSVRIEHDTFGEIEVPEDKYWGAQTERSKRNFPVGKEHMPIQVIYGFAQLKRGAALANHELGKLSDEKKNAIVYACDRILNGELDNHFPLVIWQTGSGTQSNMNVNEVVSYVANEYLKKHGSKETIHPNDDVNKSQSSNDTFPTAMHVALFHEVETKLEPALNHLRQTFKEKEDQYQSIIKIGRTHLQDATPIKLGQEISGWRYMLEKCEQLLSESKKHILNLAIGGTAVGTGINAHPEFGHKVAKYISQNTGYAFVSSENKFHALTSHDEIVQLHGTLKALATDLMKIANDIRWLASGPRAGLAEISIPENEPGSSIMPGKVNPTQCEMLTMVAVQVMGNDTTVGIASSQGNFELNVFKPVIMHNTLQSIYLLADGMNTFNKNCAIGIQPIEENINNYLNQSLMLVTALNPHIGYEKAAQIAKKAHKEGLTLKESAIESGYVTESQFEEWIKPEDMVDPH</sequence>
<feature type="chain" id="PRO_0000161317" description="Fumarate hydratase class II">
    <location>
        <begin position="1"/>
        <end position="461"/>
    </location>
</feature>
<feature type="active site" description="Proton donor/acceptor" evidence="1">
    <location>
        <position position="186"/>
    </location>
</feature>
<feature type="active site" evidence="1">
    <location>
        <position position="316"/>
    </location>
</feature>
<feature type="binding site" evidence="1">
    <location>
        <begin position="97"/>
        <end position="99"/>
    </location>
    <ligand>
        <name>substrate</name>
    </ligand>
</feature>
<feature type="binding site" description="in site B" evidence="1">
    <location>
        <begin position="127"/>
        <end position="130"/>
    </location>
    <ligand>
        <name>substrate</name>
    </ligand>
</feature>
<feature type="binding site" evidence="1">
    <location>
        <begin position="137"/>
        <end position="139"/>
    </location>
    <ligand>
        <name>substrate</name>
    </ligand>
</feature>
<feature type="binding site" evidence="1">
    <location>
        <position position="185"/>
    </location>
    <ligand>
        <name>substrate</name>
    </ligand>
</feature>
<feature type="binding site" evidence="1">
    <location>
        <position position="317"/>
    </location>
    <ligand>
        <name>substrate</name>
    </ligand>
</feature>
<feature type="binding site" evidence="1">
    <location>
        <begin position="322"/>
        <end position="324"/>
    </location>
    <ligand>
        <name>substrate</name>
    </ligand>
</feature>
<feature type="site" description="Important for catalytic activity" evidence="1">
    <location>
        <position position="329"/>
    </location>
</feature>
<dbReference type="EC" id="4.2.1.2" evidence="1"/>
<dbReference type="EMBL" id="AE015929">
    <property type="protein sequence ID" value="AAO05131.1"/>
    <property type="molecule type" value="Genomic_DNA"/>
</dbReference>
<dbReference type="RefSeq" id="NP_765087.1">
    <property type="nucleotide sequence ID" value="NC_004461.1"/>
</dbReference>
<dbReference type="RefSeq" id="WP_001829862.1">
    <property type="nucleotide sequence ID" value="NZ_WBME01000084.1"/>
</dbReference>
<dbReference type="SMR" id="Q8CNR1"/>
<dbReference type="GeneID" id="50018393"/>
<dbReference type="KEGG" id="sep:SE_1532"/>
<dbReference type="PATRIC" id="fig|176280.10.peg.1497"/>
<dbReference type="eggNOG" id="COG0114">
    <property type="taxonomic scope" value="Bacteria"/>
</dbReference>
<dbReference type="HOGENOM" id="CLU_021594_4_1_9"/>
<dbReference type="OrthoDB" id="9802809at2"/>
<dbReference type="UniPathway" id="UPA00223">
    <property type="reaction ID" value="UER01007"/>
</dbReference>
<dbReference type="Proteomes" id="UP000001411">
    <property type="component" value="Chromosome"/>
</dbReference>
<dbReference type="GO" id="GO:0005737">
    <property type="term" value="C:cytoplasm"/>
    <property type="evidence" value="ECO:0007669"/>
    <property type="project" value="UniProtKB-SubCell"/>
</dbReference>
<dbReference type="GO" id="GO:0004333">
    <property type="term" value="F:fumarate hydratase activity"/>
    <property type="evidence" value="ECO:0007669"/>
    <property type="project" value="UniProtKB-UniRule"/>
</dbReference>
<dbReference type="GO" id="GO:0006106">
    <property type="term" value="P:fumarate metabolic process"/>
    <property type="evidence" value="ECO:0007669"/>
    <property type="project" value="InterPro"/>
</dbReference>
<dbReference type="GO" id="GO:0006108">
    <property type="term" value="P:malate metabolic process"/>
    <property type="evidence" value="ECO:0007669"/>
    <property type="project" value="TreeGrafter"/>
</dbReference>
<dbReference type="GO" id="GO:0006099">
    <property type="term" value="P:tricarboxylic acid cycle"/>
    <property type="evidence" value="ECO:0007669"/>
    <property type="project" value="UniProtKB-UniRule"/>
</dbReference>
<dbReference type="CDD" id="cd01362">
    <property type="entry name" value="Fumarase_classII"/>
    <property type="match status" value="1"/>
</dbReference>
<dbReference type="FunFam" id="1.10.40.30:FF:000002">
    <property type="entry name" value="Fumarate hydratase class II"/>
    <property type="match status" value="1"/>
</dbReference>
<dbReference type="FunFam" id="1.10.275.10:FF:000001">
    <property type="entry name" value="Fumarate hydratase, mitochondrial"/>
    <property type="match status" value="1"/>
</dbReference>
<dbReference type="FunFam" id="1.20.200.10:FF:000001">
    <property type="entry name" value="Fumarate hydratase, mitochondrial"/>
    <property type="match status" value="1"/>
</dbReference>
<dbReference type="Gene3D" id="1.10.40.30">
    <property type="entry name" value="Fumarase/aspartase (C-terminal domain)"/>
    <property type="match status" value="1"/>
</dbReference>
<dbReference type="Gene3D" id="1.20.200.10">
    <property type="entry name" value="Fumarase/aspartase (Central domain)"/>
    <property type="match status" value="1"/>
</dbReference>
<dbReference type="Gene3D" id="1.10.275.10">
    <property type="entry name" value="Fumarase/aspartase (N-terminal domain)"/>
    <property type="match status" value="1"/>
</dbReference>
<dbReference type="HAMAP" id="MF_00743">
    <property type="entry name" value="FumaraseC"/>
    <property type="match status" value="1"/>
</dbReference>
<dbReference type="InterPro" id="IPR005677">
    <property type="entry name" value="Fum_hydII"/>
</dbReference>
<dbReference type="InterPro" id="IPR024083">
    <property type="entry name" value="Fumarase/histidase_N"/>
</dbReference>
<dbReference type="InterPro" id="IPR018951">
    <property type="entry name" value="Fumarase_C_C"/>
</dbReference>
<dbReference type="InterPro" id="IPR020557">
    <property type="entry name" value="Fumarate_lyase_CS"/>
</dbReference>
<dbReference type="InterPro" id="IPR000362">
    <property type="entry name" value="Fumarate_lyase_fam"/>
</dbReference>
<dbReference type="InterPro" id="IPR022761">
    <property type="entry name" value="Fumarate_lyase_N"/>
</dbReference>
<dbReference type="InterPro" id="IPR008948">
    <property type="entry name" value="L-Aspartase-like"/>
</dbReference>
<dbReference type="NCBIfam" id="TIGR00979">
    <property type="entry name" value="fumC_II"/>
    <property type="match status" value="1"/>
</dbReference>
<dbReference type="NCBIfam" id="NF008909">
    <property type="entry name" value="PRK12273.1"/>
    <property type="match status" value="1"/>
</dbReference>
<dbReference type="PANTHER" id="PTHR11444">
    <property type="entry name" value="ASPARTATEAMMONIA/ARGININOSUCCINATE/ADENYLOSUCCINATE LYASE"/>
    <property type="match status" value="1"/>
</dbReference>
<dbReference type="PANTHER" id="PTHR11444:SF1">
    <property type="entry name" value="FUMARATE HYDRATASE, MITOCHONDRIAL"/>
    <property type="match status" value="1"/>
</dbReference>
<dbReference type="Pfam" id="PF10415">
    <property type="entry name" value="FumaraseC_C"/>
    <property type="match status" value="1"/>
</dbReference>
<dbReference type="Pfam" id="PF00206">
    <property type="entry name" value="Lyase_1"/>
    <property type="match status" value="1"/>
</dbReference>
<dbReference type="PRINTS" id="PR00145">
    <property type="entry name" value="ARGSUCLYASE"/>
</dbReference>
<dbReference type="PRINTS" id="PR00149">
    <property type="entry name" value="FUMRATELYASE"/>
</dbReference>
<dbReference type="SUPFAM" id="SSF48557">
    <property type="entry name" value="L-aspartase-like"/>
    <property type="match status" value="1"/>
</dbReference>
<dbReference type="PROSITE" id="PS00163">
    <property type="entry name" value="FUMARATE_LYASES"/>
    <property type="match status" value="1"/>
</dbReference>
<gene>
    <name evidence="1" type="primary">fumC</name>
    <name type="ordered locus">SE_1532</name>
</gene>
<keyword id="KW-0963">Cytoplasm</keyword>
<keyword id="KW-0456">Lyase</keyword>
<keyword id="KW-0816">Tricarboxylic acid cycle</keyword>
<organism>
    <name type="scientific">Staphylococcus epidermidis (strain ATCC 12228 / FDA PCI 1200)</name>
    <dbReference type="NCBI Taxonomy" id="176280"/>
    <lineage>
        <taxon>Bacteria</taxon>
        <taxon>Bacillati</taxon>
        <taxon>Bacillota</taxon>
        <taxon>Bacilli</taxon>
        <taxon>Bacillales</taxon>
        <taxon>Staphylococcaceae</taxon>
        <taxon>Staphylococcus</taxon>
    </lineage>
</organism>
<reference key="1">
    <citation type="journal article" date="2003" name="Mol. Microbiol.">
        <title>Genome-based analysis of virulence genes in a non-biofilm-forming Staphylococcus epidermidis strain (ATCC 12228).</title>
        <authorList>
            <person name="Zhang Y.-Q."/>
            <person name="Ren S.-X."/>
            <person name="Li H.-L."/>
            <person name="Wang Y.-X."/>
            <person name="Fu G."/>
            <person name="Yang J."/>
            <person name="Qin Z.-Q."/>
            <person name="Miao Y.-G."/>
            <person name="Wang W.-Y."/>
            <person name="Chen R.-S."/>
            <person name="Shen Y."/>
            <person name="Chen Z."/>
            <person name="Yuan Z.-H."/>
            <person name="Zhao G.-P."/>
            <person name="Qu D."/>
            <person name="Danchin A."/>
            <person name="Wen Y.-M."/>
        </authorList>
    </citation>
    <scope>NUCLEOTIDE SEQUENCE [LARGE SCALE GENOMIC DNA]</scope>
    <source>
        <strain>ATCC 12228 / FDA PCI 1200</strain>
    </source>
</reference>
<comment type="function">
    <text evidence="1">Involved in the TCA cycle. Catalyzes the stereospecific interconversion of fumarate to L-malate.</text>
</comment>
<comment type="catalytic activity">
    <reaction evidence="1">
        <text>(S)-malate = fumarate + H2O</text>
        <dbReference type="Rhea" id="RHEA:12460"/>
        <dbReference type="ChEBI" id="CHEBI:15377"/>
        <dbReference type="ChEBI" id="CHEBI:15589"/>
        <dbReference type="ChEBI" id="CHEBI:29806"/>
        <dbReference type="EC" id="4.2.1.2"/>
    </reaction>
</comment>
<comment type="pathway">
    <text evidence="1">Carbohydrate metabolism; tricarboxylic acid cycle; (S)-malate from fumarate: step 1/1.</text>
</comment>
<comment type="subunit">
    <text evidence="1">Homotetramer.</text>
</comment>
<comment type="subcellular location">
    <subcellularLocation>
        <location evidence="1">Cytoplasm</location>
    </subcellularLocation>
</comment>
<comment type="miscellaneous">
    <text evidence="1">There are 2 substrate-binding sites: the catalytic A site, and the non-catalytic B site that may play a role in the transfer of substrate or product between the active site and the solvent. Alternatively, the B site may bind allosteric effectors.</text>
</comment>
<comment type="similarity">
    <text evidence="1">Belongs to the class-II fumarase/aspartase family. Fumarase subfamily.</text>
</comment>